<gene>
    <name evidence="1" type="primary">rsmH</name>
    <name type="synonym">mraW</name>
    <name type="ordered locus">SeSA_A0136</name>
</gene>
<protein>
    <recommendedName>
        <fullName evidence="1">Ribosomal RNA small subunit methyltransferase H</fullName>
        <ecNumber evidence="1">2.1.1.199</ecNumber>
    </recommendedName>
    <alternativeName>
        <fullName evidence="1">16S rRNA m(4)C1402 methyltransferase</fullName>
    </alternativeName>
    <alternativeName>
        <fullName evidence="1">rRNA (cytosine-N(4)-)-methyltransferase RsmH</fullName>
    </alternativeName>
</protein>
<name>RSMH_SALSV</name>
<comment type="function">
    <text evidence="1">Specifically methylates the N4 position of cytidine in position 1402 (C1402) of 16S rRNA.</text>
</comment>
<comment type="catalytic activity">
    <reaction evidence="1">
        <text>cytidine(1402) in 16S rRNA + S-adenosyl-L-methionine = N(4)-methylcytidine(1402) in 16S rRNA + S-adenosyl-L-homocysteine + H(+)</text>
        <dbReference type="Rhea" id="RHEA:42928"/>
        <dbReference type="Rhea" id="RHEA-COMP:10286"/>
        <dbReference type="Rhea" id="RHEA-COMP:10287"/>
        <dbReference type="ChEBI" id="CHEBI:15378"/>
        <dbReference type="ChEBI" id="CHEBI:57856"/>
        <dbReference type="ChEBI" id="CHEBI:59789"/>
        <dbReference type="ChEBI" id="CHEBI:74506"/>
        <dbReference type="ChEBI" id="CHEBI:82748"/>
        <dbReference type="EC" id="2.1.1.199"/>
    </reaction>
</comment>
<comment type="subcellular location">
    <subcellularLocation>
        <location evidence="1">Cytoplasm</location>
    </subcellularLocation>
</comment>
<comment type="similarity">
    <text evidence="1">Belongs to the methyltransferase superfamily. RsmH family.</text>
</comment>
<dbReference type="EC" id="2.1.1.199" evidence="1"/>
<dbReference type="EMBL" id="CP001127">
    <property type="protein sequence ID" value="ACF90384.1"/>
    <property type="molecule type" value="Genomic_DNA"/>
</dbReference>
<dbReference type="RefSeq" id="WP_000970444.1">
    <property type="nucleotide sequence ID" value="NC_011094.1"/>
</dbReference>
<dbReference type="SMR" id="B4TXH0"/>
<dbReference type="KEGG" id="sew:SeSA_A0136"/>
<dbReference type="HOGENOM" id="CLU_038422_2_0_6"/>
<dbReference type="Proteomes" id="UP000001865">
    <property type="component" value="Chromosome"/>
</dbReference>
<dbReference type="GO" id="GO:0005737">
    <property type="term" value="C:cytoplasm"/>
    <property type="evidence" value="ECO:0007669"/>
    <property type="project" value="UniProtKB-SubCell"/>
</dbReference>
<dbReference type="GO" id="GO:0071424">
    <property type="term" value="F:rRNA (cytosine-N4-)-methyltransferase activity"/>
    <property type="evidence" value="ECO:0007669"/>
    <property type="project" value="UniProtKB-UniRule"/>
</dbReference>
<dbReference type="GO" id="GO:0070475">
    <property type="term" value="P:rRNA base methylation"/>
    <property type="evidence" value="ECO:0007669"/>
    <property type="project" value="UniProtKB-UniRule"/>
</dbReference>
<dbReference type="FunFam" id="1.10.150.170:FF:000001">
    <property type="entry name" value="Ribosomal RNA small subunit methyltransferase H"/>
    <property type="match status" value="1"/>
</dbReference>
<dbReference type="Gene3D" id="1.10.150.170">
    <property type="entry name" value="Putative methyltransferase TM0872, insert domain"/>
    <property type="match status" value="1"/>
</dbReference>
<dbReference type="Gene3D" id="3.40.50.150">
    <property type="entry name" value="Vaccinia Virus protein VP39"/>
    <property type="match status" value="1"/>
</dbReference>
<dbReference type="HAMAP" id="MF_01007">
    <property type="entry name" value="16SrRNA_methyltr_H"/>
    <property type="match status" value="1"/>
</dbReference>
<dbReference type="InterPro" id="IPR002903">
    <property type="entry name" value="RsmH"/>
</dbReference>
<dbReference type="InterPro" id="IPR023397">
    <property type="entry name" value="SAM-dep_MeTrfase_MraW_recog"/>
</dbReference>
<dbReference type="InterPro" id="IPR029063">
    <property type="entry name" value="SAM-dependent_MTases_sf"/>
</dbReference>
<dbReference type="NCBIfam" id="TIGR00006">
    <property type="entry name" value="16S rRNA (cytosine(1402)-N(4))-methyltransferase RsmH"/>
    <property type="match status" value="1"/>
</dbReference>
<dbReference type="PANTHER" id="PTHR11265:SF0">
    <property type="entry name" value="12S RRNA N4-METHYLCYTIDINE METHYLTRANSFERASE"/>
    <property type="match status" value="1"/>
</dbReference>
<dbReference type="PANTHER" id="PTHR11265">
    <property type="entry name" value="S-ADENOSYL-METHYLTRANSFERASE MRAW"/>
    <property type="match status" value="1"/>
</dbReference>
<dbReference type="Pfam" id="PF01795">
    <property type="entry name" value="Methyltransf_5"/>
    <property type="match status" value="1"/>
</dbReference>
<dbReference type="PIRSF" id="PIRSF004486">
    <property type="entry name" value="MraW"/>
    <property type="match status" value="1"/>
</dbReference>
<dbReference type="SUPFAM" id="SSF81799">
    <property type="entry name" value="Putative methyltransferase TM0872, insert domain"/>
    <property type="match status" value="1"/>
</dbReference>
<dbReference type="SUPFAM" id="SSF53335">
    <property type="entry name" value="S-adenosyl-L-methionine-dependent methyltransferases"/>
    <property type="match status" value="1"/>
</dbReference>
<reference key="1">
    <citation type="journal article" date="2011" name="J. Bacteriol.">
        <title>Comparative genomics of 28 Salmonella enterica isolates: evidence for CRISPR-mediated adaptive sublineage evolution.</title>
        <authorList>
            <person name="Fricke W.F."/>
            <person name="Mammel M.K."/>
            <person name="McDermott P.F."/>
            <person name="Tartera C."/>
            <person name="White D.G."/>
            <person name="Leclerc J.E."/>
            <person name="Ravel J."/>
            <person name="Cebula T.A."/>
        </authorList>
    </citation>
    <scope>NUCLEOTIDE SEQUENCE [LARGE SCALE GENOMIC DNA]</scope>
    <source>
        <strain>CVM19633</strain>
    </source>
</reference>
<keyword id="KW-0963">Cytoplasm</keyword>
<keyword id="KW-0489">Methyltransferase</keyword>
<keyword id="KW-0698">rRNA processing</keyword>
<keyword id="KW-0949">S-adenosyl-L-methionine</keyword>
<keyword id="KW-0808">Transferase</keyword>
<organism>
    <name type="scientific">Salmonella schwarzengrund (strain CVM19633)</name>
    <dbReference type="NCBI Taxonomy" id="439843"/>
    <lineage>
        <taxon>Bacteria</taxon>
        <taxon>Pseudomonadati</taxon>
        <taxon>Pseudomonadota</taxon>
        <taxon>Gammaproteobacteria</taxon>
        <taxon>Enterobacterales</taxon>
        <taxon>Enterobacteriaceae</taxon>
        <taxon>Salmonella</taxon>
    </lineage>
</organism>
<feature type="chain" id="PRO_0000387107" description="Ribosomal RNA small subunit methyltransferase H">
    <location>
        <begin position="1"/>
        <end position="313"/>
    </location>
</feature>
<feature type="binding site" evidence="1">
    <location>
        <begin position="35"/>
        <end position="37"/>
    </location>
    <ligand>
        <name>S-adenosyl-L-methionine</name>
        <dbReference type="ChEBI" id="CHEBI:59789"/>
    </ligand>
</feature>
<feature type="binding site" evidence="1">
    <location>
        <position position="55"/>
    </location>
    <ligand>
        <name>S-adenosyl-L-methionine</name>
        <dbReference type="ChEBI" id="CHEBI:59789"/>
    </ligand>
</feature>
<feature type="binding site" evidence="1">
    <location>
        <position position="79"/>
    </location>
    <ligand>
        <name>S-adenosyl-L-methionine</name>
        <dbReference type="ChEBI" id="CHEBI:59789"/>
    </ligand>
</feature>
<feature type="binding site" evidence="1">
    <location>
        <position position="101"/>
    </location>
    <ligand>
        <name>S-adenosyl-L-methionine</name>
        <dbReference type="ChEBI" id="CHEBI:59789"/>
    </ligand>
</feature>
<feature type="binding site" evidence="1">
    <location>
        <position position="108"/>
    </location>
    <ligand>
        <name>S-adenosyl-L-methionine</name>
        <dbReference type="ChEBI" id="CHEBI:59789"/>
    </ligand>
</feature>
<sequence>MMENFKHTTVLLDEAVNGLNIRPDGIYIDGTFGRGGHSRLILSQLGEEGRLLAIDRDPQAIAVAQTINDPRFSIIHGPFSALADYVAERELTGKIDGILLDLGVSSPQLDDAERGFSFMRDGPLDMRMDPTRGQSAAEWLQTAEEADIAWVLKTFGEERFAKRIARAIVERNREQPMTRTKELAEVVAAATPVKDKFKHPATRTFQAVRIWVNSELEEIEQALKSSLSVLAPGGRLSIISFHSLEDRIVKRFMREQSRGPQVPAGLPMTEAQLKKLGGRELRALGKLMPGEKEVAENPRARSSVLRIAERTNA</sequence>
<proteinExistence type="inferred from homology"/>
<accession>B4TXH0</accession>
<evidence type="ECO:0000255" key="1">
    <source>
        <dbReference type="HAMAP-Rule" id="MF_01007"/>
    </source>
</evidence>